<reference key="1">
    <citation type="journal article" date="1993" name="Plant Physiol.">
        <title>Phytoene desaturase from Arabidopsis.</title>
        <authorList>
            <person name="Bartley G.E."/>
            <person name="Scolnik P.A."/>
        </authorList>
    </citation>
    <scope>NUCLEOTIDE SEQUENCE [MRNA]</scope>
</reference>
<reference key="2">
    <citation type="journal article" date="1998" name="Nature">
        <title>Analysis of 1.9 Mb of contiguous sequence from chromosome 4 of Arabidopsis thaliana.</title>
        <authorList>
            <person name="Bevan M."/>
            <person name="Bancroft I."/>
            <person name="Bent E."/>
            <person name="Love K."/>
            <person name="Goodman H.M."/>
            <person name="Dean C."/>
            <person name="Bergkamp R."/>
            <person name="Dirkse W."/>
            <person name="van Staveren M."/>
            <person name="Stiekema W."/>
            <person name="Drost L."/>
            <person name="Ridley P."/>
            <person name="Hudson S.-A."/>
            <person name="Patel K."/>
            <person name="Murphy G."/>
            <person name="Piffanelli P."/>
            <person name="Wedler H."/>
            <person name="Wedler E."/>
            <person name="Wambutt R."/>
            <person name="Weitzenegger T."/>
            <person name="Pohl T."/>
            <person name="Terryn N."/>
            <person name="Gielen J."/>
            <person name="Villarroel R."/>
            <person name="De Clercq R."/>
            <person name="van Montagu M."/>
            <person name="Lecharny A."/>
            <person name="Aubourg S."/>
            <person name="Gy I."/>
            <person name="Kreis M."/>
            <person name="Lao N."/>
            <person name="Kavanagh T."/>
            <person name="Hempel S."/>
            <person name="Kotter P."/>
            <person name="Entian K.-D."/>
            <person name="Rieger M."/>
            <person name="Schaefer M."/>
            <person name="Funk B."/>
            <person name="Mueller-Auer S."/>
            <person name="Silvey M."/>
            <person name="James R."/>
            <person name="Monfort A."/>
            <person name="Pons A."/>
            <person name="Puigdomenech P."/>
            <person name="Douka A."/>
            <person name="Voukelatou E."/>
            <person name="Milioni D."/>
            <person name="Hatzopoulos P."/>
            <person name="Piravandi E."/>
            <person name="Obermaier B."/>
            <person name="Hilbert H."/>
            <person name="Duesterhoeft A."/>
            <person name="Moores T."/>
            <person name="Jones J.D.G."/>
            <person name="Eneva T."/>
            <person name="Palme K."/>
            <person name="Benes V."/>
            <person name="Rechmann S."/>
            <person name="Ansorge W."/>
            <person name="Cooke R."/>
            <person name="Berger C."/>
            <person name="Delseny M."/>
            <person name="Voet M."/>
            <person name="Volckaert G."/>
            <person name="Mewes H.-W."/>
            <person name="Klosterman S."/>
            <person name="Schueller C."/>
            <person name="Chalwatzis N."/>
        </authorList>
    </citation>
    <scope>NUCLEOTIDE SEQUENCE [LARGE SCALE GENOMIC DNA]</scope>
    <source>
        <strain>cv. Columbia</strain>
    </source>
</reference>
<reference key="3">
    <citation type="journal article" date="1999" name="Nature">
        <title>Sequence and analysis of chromosome 4 of the plant Arabidopsis thaliana.</title>
        <authorList>
            <person name="Mayer K.F.X."/>
            <person name="Schueller C."/>
            <person name="Wambutt R."/>
            <person name="Murphy G."/>
            <person name="Volckaert G."/>
            <person name="Pohl T."/>
            <person name="Duesterhoeft A."/>
            <person name="Stiekema W."/>
            <person name="Entian K.-D."/>
            <person name="Terryn N."/>
            <person name="Harris B."/>
            <person name="Ansorge W."/>
            <person name="Brandt P."/>
            <person name="Grivell L.A."/>
            <person name="Rieger M."/>
            <person name="Weichselgartner M."/>
            <person name="de Simone V."/>
            <person name="Obermaier B."/>
            <person name="Mache R."/>
            <person name="Mueller M."/>
            <person name="Kreis M."/>
            <person name="Delseny M."/>
            <person name="Puigdomenech P."/>
            <person name="Watson M."/>
            <person name="Schmidtheini T."/>
            <person name="Reichert B."/>
            <person name="Portetelle D."/>
            <person name="Perez-Alonso M."/>
            <person name="Boutry M."/>
            <person name="Bancroft I."/>
            <person name="Vos P."/>
            <person name="Hoheisel J."/>
            <person name="Zimmermann W."/>
            <person name="Wedler H."/>
            <person name="Ridley P."/>
            <person name="Langham S.-A."/>
            <person name="McCullagh B."/>
            <person name="Bilham L."/>
            <person name="Robben J."/>
            <person name="van der Schueren J."/>
            <person name="Grymonprez B."/>
            <person name="Chuang Y.-J."/>
            <person name="Vandenbussche F."/>
            <person name="Braeken M."/>
            <person name="Weltjens I."/>
            <person name="Voet M."/>
            <person name="Bastiaens I."/>
            <person name="Aert R."/>
            <person name="Defoor E."/>
            <person name="Weitzenegger T."/>
            <person name="Bothe G."/>
            <person name="Ramsperger U."/>
            <person name="Hilbert H."/>
            <person name="Braun M."/>
            <person name="Holzer E."/>
            <person name="Brandt A."/>
            <person name="Peters S."/>
            <person name="van Staveren M."/>
            <person name="Dirkse W."/>
            <person name="Mooijman P."/>
            <person name="Klein Lankhorst R."/>
            <person name="Rose M."/>
            <person name="Hauf J."/>
            <person name="Koetter P."/>
            <person name="Berneiser S."/>
            <person name="Hempel S."/>
            <person name="Feldpausch M."/>
            <person name="Lamberth S."/>
            <person name="Van den Daele H."/>
            <person name="De Keyser A."/>
            <person name="Buysshaert C."/>
            <person name="Gielen J."/>
            <person name="Villarroel R."/>
            <person name="De Clercq R."/>
            <person name="van Montagu M."/>
            <person name="Rogers J."/>
            <person name="Cronin A."/>
            <person name="Quail M.A."/>
            <person name="Bray-Allen S."/>
            <person name="Clark L."/>
            <person name="Doggett J."/>
            <person name="Hall S."/>
            <person name="Kay M."/>
            <person name="Lennard N."/>
            <person name="McLay K."/>
            <person name="Mayes R."/>
            <person name="Pettett A."/>
            <person name="Rajandream M.A."/>
            <person name="Lyne M."/>
            <person name="Benes V."/>
            <person name="Rechmann S."/>
            <person name="Borkova D."/>
            <person name="Bloecker H."/>
            <person name="Scharfe M."/>
            <person name="Grimm M."/>
            <person name="Loehnert T.-H."/>
            <person name="Dose S."/>
            <person name="de Haan M."/>
            <person name="Maarse A.C."/>
            <person name="Schaefer M."/>
            <person name="Mueller-Auer S."/>
            <person name="Gabel C."/>
            <person name="Fuchs M."/>
            <person name="Fartmann B."/>
            <person name="Granderath K."/>
            <person name="Dauner D."/>
            <person name="Herzl A."/>
            <person name="Neumann S."/>
            <person name="Argiriou A."/>
            <person name="Vitale D."/>
            <person name="Liguori R."/>
            <person name="Piravandi E."/>
            <person name="Massenet O."/>
            <person name="Quigley F."/>
            <person name="Clabauld G."/>
            <person name="Muendlein A."/>
            <person name="Felber R."/>
            <person name="Schnabl S."/>
            <person name="Hiller R."/>
            <person name="Schmidt W."/>
            <person name="Lecharny A."/>
            <person name="Aubourg S."/>
            <person name="Chefdor F."/>
            <person name="Cooke R."/>
            <person name="Berger C."/>
            <person name="Monfort A."/>
            <person name="Casacuberta E."/>
            <person name="Gibbons T."/>
            <person name="Weber N."/>
            <person name="Vandenbol M."/>
            <person name="Bargues M."/>
            <person name="Terol J."/>
            <person name="Torres A."/>
            <person name="Perez-Perez A."/>
            <person name="Purnelle B."/>
            <person name="Bent E."/>
            <person name="Johnson S."/>
            <person name="Tacon D."/>
            <person name="Jesse T."/>
            <person name="Heijnen L."/>
            <person name="Schwarz S."/>
            <person name="Scholler P."/>
            <person name="Heber S."/>
            <person name="Francs P."/>
            <person name="Bielke C."/>
            <person name="Frishman D."/>
            <person name="Haase D."/>
            <person name="Lemcke K."/>
            <person name="Mewes H.-W."/>
            <person name="Stocker S."/>
            <person name="Zaccaria P."/>
            <person name="Bevan M."/>
            <person name="Wilson R.K."/>
            <person name="de la Bastide M."/>
            <person name="Habermann K."/>
            <person name="Parnell L."/>
            <person name="Dedhia N."/>
            <person name="Gnoj L."/>
            <person name="Schutz K."/>
            <person name="Huang E."/>
            <person name="Spiegel L."/>
            <person name="Sekhon M."/>
            <person name="Murray J."/>
            <person name="Sheet P."/>
            <person name="Cordes M."/>
            <person name="Abu-Threideh J."/>
            <person name="Stoneking T."/>
            <person name="Kalicki J."/>
            <person name="Graves T."/>
            <person name="Harmon G."/>
            <person name="Edwards J."/>
            <person name="Latreille P."/>
            <person name="Courtney L."/>
            <person name="Cloud J."/>
            <person name="Abbott A."/>
            <person name="Scott K."/>
            <person name="Johnson D."/>
            <person name="Minx P."/>
            <person name="Bentley D."/>
            <person name="Fulton B."/>
            <person name="Miller N."/>
            <person name="Greco T."/>
            <person name="Kemp K."/>
            <person name="Kramer J."/>
            <person name="Fulton L."/>
            <person name="Mardis E."/>
            <person name="Dante M."/>
            <person name="Pepin K."/>
            <person name="Hillier L.W."/>
            <person name="Nelson J."/>
            <person name="Spieth J."/>
            <person name="Ryan E."/>
            <person name="Andrews S."/>
            <person name="Geisel C."/>
            <person name="Layman D."/>
            <person name="Du H."/>
            <person name="Ali J."/>
            <person name="Berghoff A."/>
            <person name="Jones K."/>
            <person name="Drone K."/>
            <person name="Cotton M."/>
            <person name="Joshu C."/>
            <person name="Antonoiu B."/>
            <person name="Zidanic M."/>
            <person name="Strong C."/>
            <person name="Sun H."/>
            <person name="Lamar B."/>
            <person name="Yordan C."/>
            <person name="Ma P."/>
            <person name="Zhong J."/>
            <person name="Preston R."/>
            <person name="Vil D."/>
            <person name="Shekher M."/>
            <person name="Matero A."/>
            <person name="Shah R."/>
            <person name="Swaby I.K."/>
            <person name="O'Shaughnessy A."/>
            <person name="Rodriguez M."/>
            <person name="Hoffman J."/>
            <person name="Till S."/>
            <person name="Granat S."/>
            <person name="Shohdy N."/>
            <person name="Hasegawa A."/>
            <person name="Hameed A."/>
            <person name="Lodhi M."/>
            <person name="Johnson A."/>
            <person name="Chen E."/>
            <person name="Marra M.A."/>
            <person name="Martienssen R."/>
            <person name="McCombie W.R."/>
        </authorList>
    </citation>
    <scope>NUCLEOTIDE SEQUENCE [LARGE SCALE GENOMIC DNA]</scope>
    <source>
        <strain>cv. Columbia</strain>
    </source>
</reference>
<reference key="4">
    <citation type="journal article" date="2017" name="Plant J.">
        <title>Araport11: a complete reannotation of the Arabidopsis thaliana reference genome.</title>
        <authorList>
            <person name="Cheng C.Y."/>
            <person name="Krishnakumar V."/>
            <person name="Chan A.P."/>
            <person name="Thibaud-Nissen F."/>
            <person name="Schobel S."/>
            <person name="Town C.D."/>
        </authorList>
    </citation>
    <scope>GENOME REANNOTATION</scope>
    <source>
        <strain>cv. Columbia</strain>
    </source>
</reference>
<reference key="5">
    <citation type="journal article" date="2003" name="Science">
        <title>Empirical analysis of transcriptional activity in the Arabidopsis genome.</title>
        <authorList>
            <person name="Yamada K."/>
            <person name="Lim J."/>
            <person name="Dale J.M."/>
            <person name="Chen H."/>
            <person name="Shinn P."/>
            <person name="Palm C.J."/>
            <person name="Southwick A.M."/>
            <person name="Wu H.C."/>
            <person name="Kim C.J."/>
            <person name="Nguyen M."/>
            <person name="Pham P.K."/>
            <person name="Cheuk R.F."/>
            <person name="Karlin-Newmann G."/>
            <person name="Liu S.X."/>
            <person name="Lam B."/>
            <person name="Sakano H."/>
            <person name="Wu T."/>
            <person name="Yu G."/>
            <person name="Miranda M."/>
            <person name="Quach H.L."/>
            <person name="Tripp M."/>
            <person name="Chang C.H."/>
            <person name="Lee J.M."/>
            <person name="Toriumi M.J."/>
            <person name="Chan M.M."/>
            <person name="Tang C.C."/>
            <person name="Onodera C.S."/>
            <person name="Deng J.M."/>
            <person name="Akiyama K."/>
            <person name="Ansari Y."/>
            <person name="Arakawa T."/>
            <person name="Banh J."/>
            <person name="Banno F."/>
            <person name="Bowser L."/>
            <person name="Brooks S.Y."/>
            <person name="Carninci P."/>
            <person name="Chao Q."/>
            <person name="Choy N."/>
            <person name="Enju A."/>
            <person name="Goldsmith A.D."/>
            <person name="Gurjal M."/>
            <person name="Hansen N.F."/>
            <person name="Hayashizaki Y."/>
            <person name="Johnson-Hopson C."/>
            <person name="Hsuan V.W."/>
            <person name="Iida K."/>
            <person name="Karnes M."/>
            <person name="Khan S."/>
            <person name="Koesema E."/>
            <person name="Ishida J."/>
            <person name="Jiang P.X."/>
            <person name="Jones T."/>
            <person name="Kawai J."/>
            <person name="Kamiya A."/>
            <person name="Meyers C."/>
            <person name="Nakajima M."/>
            <person name="Narusaka M."/>
            <person name="Seki M."/>
            <person name="Sakurai T."/>
            <person name="Satou M."/>
            <person name="Tamse R."/>
            <person name="Vaysberg M."/>
            <person name="Wallender E.K."/>
            <person name="Wong C."/>
            <person name="Yamamura Y."/>
            <person name="Yuan S."/>
            <person name="Shinozaki K."/>
            <person name="Davis R.W."/>
            <person name="Theologis A."/>
            <person name="Ecker J.R."/>
        </authorList>
    </citation>
    <scope>NUCLEOTIDE SEQUENCE [LARGE SCALE MRNA]</scope>
    <source>
        <strain>cv. Columbia</strain>
    </source>
</reference>
<reference key="6">
    <citation type="journal article" date="1999" name="Eur. J. Biochem.">
        <title>Two Arabidopsis thaliana carotene desaturases, phytoene desaturase and zeta-carotene desaturase, expressed in Escherichia coli, catalyze a poly-cis pathway to yield pro-lycopene.</title>
        <authorList>
            <person name="Bartley G.E."/>
            <person name="Scolnik P.A."/>
            <person name="Beyer P."/>
        </authorList>
    </citation>
    <scope>FUNCTION</scope>
    <scope>CATALYTIC ACTIVITY</scope>
    <scope>PATHWAY</scope>
</reference>
<proteinExistence type="evidence at protein level"/>
<keyword id="KW-0025">Alternative splicing</keyword>
<keyword id="KW-0125">Carotenoid biosynthesis</keyword>
<keyword id="KW-0150">Chloroplast</keyword>
<keyword id="KW-0957">Chromoplast</keyword>
<keyword id="KW-0274">FAD</keyword>
<keyword id="KW-0285">Flavoprotein</keyword>
<keyword id="KW-0472">Membrane</keyword>
<keyword id="KW-0560">Oxidoreductase</keyword>
<keyword id="KW-0934">Plastid</keyword>
<keyword id="KW-1185">Reference proteome</keyword>
<keyword id="KW-0809">Transit peptide</keyword>
<feature type="transit peptide" description="Chloroplast and chromoplast" evidence="3">
    <location>
        <begin position="1"/>
        <end position="86"/>
    </location>
</feature>
<feature type="chain" id="PRO_0000006322" description="15-cis-phytoene desaturase, chloroplastic/chromoplastic">
    <location>
        <begin position="87"/>
        <end position="566"/>
    </location>
</feature>
<feature type="binding site" evidence="1">
    <location>
        <position position="103"/>
    </location>
    <ligand>
        <name>FAD</name>
        <dbReference type="ChEBI" id="CHEBI:57692"/>
    </ligand>
</feature>
<feature type="binding site" evidence="1">
    <location>
        <begin position="122"/>
        <end position="123"/>
    </location>
    <ligand>
        <name>FAD</name>
        <dbReference type="ChEBI" id="CHEBI:57692"/>
    </ligand>
</feature>
<feature type="binding site" evidence="1">
    <location>
        <position position="130"/>
    </location>
    <ligand>
        <name>FAD</name>
        <dbReference type="ChEBI" id="CHEBI:57692"/>
    </ligand>
</feature>
<feature type="binding site" evidence="1">
    <location>
        <begin position="147"/>
        <end position="148"/>
    </location>
    <ligand>
        <name>FAD</name>
        <dbReference type="ChEBI" id="CHEBI:57692"/>
    </ligand>
</feature>
<feature type="binding site" evidence="1">
    <location>
        <position position="153"/>
    </location>
    <ligand>
        <name>FAD</name>
        <dbReference type="ChEBI" id="CHEBI:57692"/>
    </ligand>
</feature>
<feature type="binding site" evidence="1">
    <location>
        <position position="288"/>
    </location>
    <ligand>
        <name>substrate</name>
    </ligand>
</feature>
<feature type="binding site" evidence="1">
    <location>
        <position position="330"/>
    </location>
    <ligand>
        <name>FAD</name>
        <dbReference type="ChEBI" id="CHEBI:57692"/>
    </ligand>
</feature>
<feature type="binding site" evidence="1">
    <location>
        <position position="519"/>
    </location>
    <ligand>
        <name>FAD</name>
        <dbReference type="ChEBI" id="CHEBI:57692"/>
    </ligand>
</feature>
<feature type="binding site" evidence="1">
    <location>
        <position position="527"/>
    </location>
    <ligand>
        <name>substrate</name>
    </ligand>
</feature>
<feature type="binding site" evidence="1">
    <location>
        <position position="529"/>
    </location>
    <ligand>
        <name>FAD</name>
        <dbReference type="ChEBI" id="CHEBI:57692"/>
    </ligand>
</feature>
<evidence type="ECO:0000250" key="1">
    <source>
        <dbReference type="UniProtKB" id="A2XDA1"/>
    </source>
</evidence>
<evidence type="ECO:0000250" key="2">
    <source>
        <dbReference type="UniProtKB" id="Q40406"/>
    </source>
</evidence>
<evidence type="ECO:0000255" key="3"/>
<evidence type="ECO:0000269" key="4">
    <source>
    </source>
</evidence>
<evidence type="ECO:0000303" key="5">
    <source>
    </source>
</evidence>
<evidence type="ECO:0000305" key="6"/>
<protein>
    <recommendedName>
        <fullName evidence="6">15-cis-phytoene desaturase, chloroplastic/chromoplastic</fullName>
        <ecNumber evidence="4">1.3.5.5</ecNumber>
    </recommendedName>
    <alternativeName>
        <fullName evidence="6">Phytoene dehydrogenase</fullName>
    </alternativeName>
    <alternativeName>
        <fullName evidence="5">Phytoene desaturase</fullName>
    </alternativeName>
</protein>
<dbReference type="EC" id="1.3.5.5" evidence="4"/>
<dbReference type="EMBL" id="L16237">
    <property type="protein sequence ID" value="AAA20109.1"/>
    <property type="molecule type" value="mRNA"/>
</dbReference>
<dbReference type="EMBL" id="Z97335">
    <property type="protein sequence ID" value="CAB10200.1"/>
    <property type="molecule type" value="Genomic_DNA"/>
</dbReference>
<dbReference type="EMBL" id="AL161538">
    <property type="protein sequence ID" value="CAB78463.1"/>
    <property type="molecule type" value="Genomic_DNA"/>
</dbReference>
<dbReference type="EMBL" id="CP002687">
    <property type="protein sequence ID" value="AEE83393.1"/>
    <property type="molecule type" value="Genomic_DNA"/>
</dbReference>
<dbReference type="EMBL" id="CP002687">
    <property type="protein sequence ID" value="AEE83394.2"/>
    <property type="molecule type" value="Genomic_DNA"/>
</dbReference>
<dbReference type="EMBL" id="CP002687">
    <property type="protein sequence ID" value="ANM67189.1"/>
    <property type="molecule type" value="Genomic_DNA"/>
</dbReference>
<dbReference type="EMBL" id="AF360196">
    <property type="protein sequence ID" value="AAK25906.1"/>
    <property type="molecule type" value="mRNA"/>
</dbReference>
<dbReference type="EMBL" id="AY040007">
    <property type="protein sequence ID" value="AAK64084.1"/>
    <property type="molecule type" value="mRNA"/>
</dbReference>
<dbReference type="PIR" id="F71403">
    <property type="entry name" value="F71403"/>
</dbReference>
<dbReference type="RefSeq" id="NP_001319934.1">
    <molecule id="Q07356-1"/>
    <property type="nucleotide sequence ID" value="NM_001340907.1"/>
</dbReference>
<dbReference type="RefSeq" id="NP_001329033.1">
    <molecule id="Q07356-1"/>
    <property type="nucleotide sequence ID" value="NM_001340908.1"/>
</dbReference>
<dbReference type="RefSeq" id="NP_193157.1">
    <molecule id="Q07356-1"/>
    <property type="nucleotide sequence ID" value="NM_117498.4"/>
</dbReference>
<dbReference type="SMR" id="Q07356"/>
<dbReference type="FunCoup" id="Q07356">
    <property type="interactions" value="1049"/>
</dbReference>
<dbReference type="STRING" id="3702.Q07356"/>
<dbReference type="iPTMnet" id="Q07356"/>
<dbReference type="PaxDb" id="3702-AT4G14210.1"/>
<dbReference type="ProteomicsDB" id="251394">
    <molecule id="Q07356-1"/>
</dbReference>
<dbReference type="EnsemblPlants" id="AT4G14210.1">
    <molecule id="Q07356-1"/>
    <property type="protein sequence ID" value="AT4G14210.1"/>
    <property type="gene ID" value="AT4G14210"/>
</dbReference>
<dbReference type="EnsemblPlants" id="AT4G14210.2">
    <molecule id="Q07356-1"/>
    <property type="protein sequence ID" value="AT4G14210.2"/>
    <property type="gene ID" value="AT4G14210"/>
</dbReference>
<dbReference type="EnsemblPlants" id="AT4G14210.3">
    <molecule id="Q07356-1"/>
    <property type="protein sequence ID" value="AT4G14210.3"/>
    <property type="gene ID" value="AT4G14210"/>
</dbReference>
<dbReference type="GeneID" id="827061"/>
<dbReference type="Gramene" id="AT4G14210.1">
    <molecule id="Q07356-1"/>
    <property type="protein sequence ID" value="AT4G14210.1"/>
    <property type="gene ID" value="AT4G14210"/>
</dbReference>
<dbReference type="Gramene" id="AT4G14210.2">
    <molecule id="Q07356-1"/>
    <property type="protein sequence ID" value="AT4G14210.2"/>
    <property type="gene ID" value="AT4G14210"/>
</dbReference>
<dbReference type="Gramene" id="AT4G14210.3">
    <molecule id="Q07356-1"/>
    <property type="protein sequence ID" value="AT4G14210.3"/>
    <property type="gene ID" value="AT4G14210"/>
</dbReference>
<dbReference type="KEGG" id="ath:AT4G14210"/>
<dbReference type="Araport" id="AT4G14210"/>
<dbReference type="TAIR" id="AT4G14210">
    <property type="gene designation" value="PDS3"/>
</dbReference>
<dbReference type="eggNOG" id="KOG0029">
    <property type="taxonomic scope" value="Eukaryota"/>
</dbReference>
<dbReference type="HOGENOM" id="CLU_022687_1_0_1"/>
<dbReference type="InParanoid" id="Q07356"/>
<dbReference type="OMA" id="HSMIFNQ"/>
<dbReference type="PhylomeDB" id="Q07356"/>
<dbReference type="BioCyc" id="MetaCyc:AT4G14210-MONOMER"/>
<dbReference type="BRENDA" id="1.3.5.5">
    <property type="organism ID" value="399"/>
</dbReference>
<dbReference type="UniPathway" id="UPA00803"/>
<dbReference type="PRO" id="PR:Q07356"/>
<dbReference type="Proteomes" id="UP000006548">
    <property type="component" value="Chromosome 4"/>
</dbReference>
<dbReference type="ExpressionAtlas" id="Q07356">
    <property type="expression patterns" value="baseline and differential"/>
</dbReference>
<dbReference type="GO" id="GO:0009507">
    <property type="term" value="C:chloroplast"/>
    <property type="evidence" value="ECO:0007005"/>
    <property type="project" value="TAIR"/>
</dbReference>
<dbReference type="GO" id="GO:0009941">
    <property type="term" value="C:chloroplast envelope"/>
    <property type="evidence" value="ECO:0007005"/>
    <property type="project" value="TAIR"/>
</dbReference>
<dbReference type="GO" id="GO:0009534">
    <property type="term" value="C:chloroplast thylakoid"/>
    <property type="evidence" value="ECO:0007005"/>
    <property type="project" value="TAIR"/>
</dbReference>
<dbReference type="GO" id="GO:0009509">
    <property type="term" value="C:chromoplast"/>
    <property type="evidence" value="ECO:0000250"/>
    <property type="project" value="UniProtKB"/>
</dbReference>
<dbReference type="GO" id="GO:0005829">
    <property type="term" value="C:cytosol"/>
    <property type="evidence" value="ECO:0007005"/>
    <property type="project" value="TAIR"/>
</dbReference>
<dbReference type="GO" id="GO:0016020">
    <property type="term" value="C:membrane"/>
    <property type="evidence" value="ECO:0007669"/>
    <property type="project" value="UniProtKB-SubCell"/>
</dbReference>
<dbReference type="GO" id="GO:0016166">
    <property type="term" value="F:phytoene dehydrogenase activity"/>
    <property type="evidence" value="ECO:0000314"/>
    <property type="project" value="TAIR"/>
</dbReference>
<dbReference type="GO" id="GO:0016117">
    <property type="term" value="P:carotenoid biosynthetic process"/>
    <property type="evidence" value="ECO:0000314"/>
    <property type="project" value="TAIR"/>
</dbReference>
<dbReference type="FunFam" id="3.50.50.60:FF:000091">
    <property type="entry name" value="15-cis-phytoene desaturase, chloroplastic/chromoplastic"/>
    <property type="match status" value="1"/>
</dbReference>
<dbReference type="Gene3D" id="3.50.50.60">
    <property type="entry name" value="FAD/NAD(P)-binding domain"/>
    <property type="match status" value="1"/>
</dbReference>
<dbReference type="InterPro" id="IPR002937">
    <property type="entry name" value="Amino_oxidase"/>
</dbReference>
<dbReference type="InterPro" id="IPR036188">
    <property type="entry name" value="FAD/NAD-bd_sf"/>
</dbReference>
<dbReference type="InterPro" id="IPR014102">
    <property type="entry name" value="Phytoene_desaturase"/>
</dbReference>
<dbReference type="InterPro" id="IPR050464">
    <property type="entry name" value="Zeta_carotene_desat/Oxidored"/>
</dbReference>
<dbReference type="NCBIfam" id="TIGR02731">
    <property type="entry name" value="phytoene_desat"/>
    <property type="match status" value="1"/>
</dbReference>
<dbReference type="PANTHER" id="PTHR42923:SF45">
    <property type="entry name" value="15-CIS-PHYTOENE DESATURASE, CHLOROPLASTIC_CHROMOPLASTIC"/>
    <property type="match status" value="1"/>
</dbReference>
<dbReference type="PANTHER" id="PTHR42923">
    <property type="entry name" value="PROTOPORPHYRINOGEN OXIDASE"/>
    <property type="match status" value="1"/>
</dbReference>
<dbReference type="Pfam" id="PF01593">
    <property type="entry name" value="Amino_oxidase"/>
    <property type="match status" value="1"/>
</dbReference>
<dbReference type="SUPFAM" id="SSF51905">
    <property type="entry name" value="FAD/NAD(P)-binding domain"/>
    <property type="match status" value="1"/>
</dbReference>
<accession>Q07356</accession>
<accession>F4JUN0</accession>
<sequence>MVVFGNVSAANLPYQNGFLEALSSGGCELMGHSFRVPTSQALKTRTRRRSTAGPLQVVCVDIPRPELENTVNFLEAASLSASFRSAPRPAKPLKVVIAGAGLAGLSTAKYLADAGHKPLLLEARDVLGGKIAAWKDEDGDWYETGLHIFFGAYPNVQNLFGELGINDRLQWKEHSMIFAMPSKPGEFSRFDFPDVLPAPLNGIWAILRNNEMLTWPEKIKFAIGLLPAMVGGQAYVEAQDGLSVKEWMEKQGVPERVTDEVFIAMSKALNFINPDELSMQCILIALNRFLQEKHGSKMAFLDGNPPERLCMPVVDHIRSLGGEVQLNSRIKKIELNDDGTVKSFLLTNGSTVEGDAYVFAAPVDILKLLLPDPWKEIPYFKKLDKLVGVPVINVHIWFDRKLKNTYDHLLFSRSNLLSVYADMSLTCKEYYDPNRSMLELVFAPAEEWISRTDSDIIDATMKELEKLFPDEISADQSKAKILKYHVVKTPRSVYKTIPNCEPCRPLQRSPIEGFYLAGDYTKQKYLASMEGAVLSGKFCSQSIVQDYELLAASGPRKLSEATVSSS</sequence>
<gene>
    <name type="primary">PDS</name>
    <name type="ordered locus">At4g14210</name>
    <name type="ORF">dl3145c</name>
</gene>
<comment type="function">
    <text evidence="4">Converts phytoene into zeta-carotene via the intermediary of phytofluene by the symmetrical introduction of two double bonds at the C-11 and C-11' positions of phytoene with a concomitant isomerization of two neighboring double bonds at the C9 and C9' positions from trans to cis.</text>
</comment>
<comment type="catalytic activity">
    <reaction evidence="4">
        <text>2 a plastoquinone + 15-cis-phytoene = 9,9',15-tri-cis-zeta-carotene + 2 a plastoquinol</text>
        <dbReference type="Rhea" id="RHEA:30287"/>
        <dbReference type="Rhea" id="RHEA-COMP:9561"/>
        <dbReference type="Rhea" id="RHEA-COMP:9562"/>
        <dbReference type="ChEBI" id="CHEBI:17757"/>
        <dbReference type="ChEBI" id="CHEBI:27787"/>
        <dbReference type="ChEBI" id="CHEBI:48717"/>
        <dbReference type="ChEBI" id="CHEBI:62192"/>
        <dbReference type="EC" id="1.3.5.5"/>
    </reaction>
</comment>
<comment type="cofactor">
    <cofactor evidence="1">
        <name>FAD</name>
        <dbReference type="ChEBI" id="CHEBI:57692"/>
    </cofactor>
</comment>
<comment type="pathway">
    <text>Carotenoid biosynthesis; lycopene biosynthesis.</text>
</comment>
<comment type="subunit">
    <text evidence="1">Homotetramer.</text>
</comment>
<comment type="subcellular location">
    <subcellularLocation>
        <location evidence="2">Plastid</location>
        <location evidence="2">Chloroplast</location>
    </subcellularLocation>
    <subcellularLocation>
        <location evidence="2">Plastid</location>
        <location evidence="2">Chromoplast</location>
    </subcellularLocation>
    <subcellularLocation>
        <location evidence="1">Membrane</location>
        <topology evidence="1">Peripheral membrane protein</topology>
    </subcellularLocation>
</comment>
<comment type="alternative products">
    <event type="alternative splicing"/>
    <isoform>
        <id>Q07356-1</id>
        <name>1</name>
        <sequence type="displayed"/>
    </isoform>
    <text>A number of isoforms are produced. According to EST sequences.</text>
</comment>
<comment type="developmental stage">
    <text>Ripening fruit.</text>
</comment>
<comment type="similarity">
    <text evidence="6">Belongs to the carotenoid/retinoid oxidoreductase family.</text>
</comment>
<name>PDS_ARATH</name>
<organism>
    <name type="scientific">Arabidopsis thaliana</name>
    <name type="common">Mouse-ear cress</name>
    <dbReference type="NCBI Taxonomy" id="3702"/>
    <lineage>
        <taxon>Eukaryota</taxon>
        <taxon>Viridiplantae</taxon>
        <taxon>Streptophyta</taxon>
        <taxon>Embryophyta</taxon>
        <taxon>Tracheophyta</taxon>
        <taxon>Spermatophyta</taxon>
        <taxon>Magnoliopsida</taxon>
        <taxon>eudicotyledons</taxon>
        <taxon>Gunneridae</taxon>
        <taxon>Pentapetalae</taxon>
        <taxon>rosids</taxon>
        <taxon>malvids</taxon>
        <taxon>Brassicales</taxon>
        <taxon>Brassicaceae</taxon>
        <taxon>Camelineae</taxon>
        <taxon>Arabidopsis</taxon>
    </lineage>
</organism>